<feature type="chain" id="PRO_0000278700" description="ClpXP adapter protein SpxH">
    <location>
        <begin position="1"/>
        <end position="265"/>
    </location>
</feature>
<evidence type="ECO:0000255" key="1">
    <source>
        <dbReference type="HAMAP-Rule" id="MF_02245"/>
    </source>
</evidence>
<accession>Q4L510</accession>
<dbReference type="EMBL" id="AP006716">
    <property type="protein sequence ID" value="BAE05265.1"/>
    <property type="molecule type" value="Genomic_DNA"/>
</dbReference>
<dbReference type="SMR" id="Q4L510"/>
<dbReference type="KEGG" id="sha:SH1956"/>
<dbReference type="eggNOG" id="COG2761">
    <property type="taxonomic scope" value="Bacteria"/>
</dbReference>
<dbReference type="HOGENOM" id="CLU_069785_0_0_9"/>
<dbReference type="OrthoDB" id="9813770at2"/>
<dbReference type="Proteomes" id="UP000000543">
    <property type="component" value="Chromosome"/>
</dbReference>
<dbReference type="GO" id="GO:0005737">
    <property type="term" value="C:cytoplasm"/>
    <property type="evidence" value="ECO:0007669"/>
    <property type="project" value="UniProtKB-SubCell"/>
</dbReference>
<dbReference type="Gene3D" id="3.40.30.10">
    <property type="entry name" value="Glutaredoxin"/>
    <property type="match status" value="1"/>
</dbReference>
<dbReference type="HAMAP" id="MF_02245">
    <property type="entry name" value="Adapter_SpxH"/>
    <property type="match status" value="1"/>
</dbReference>
<dbReference type="InterPro" id="IPR046404">
    <property type="entry name" value="Adapter_SpxH"/>
</dbReference>
<dbReference type="InterPro" id="IPR036249">
    <property type="entry name" value="Thioredoxin-like_sf"/>
</dbReference>
<dbReference type="Pfam" id="PF13743">
    <property type="entry name" value="Thioredoxin_5"/>
    <property type="match status" value="1"/>
</dbReference>
<dbReference type="SUPFAM" id="SSF52833">
    <property type="entry name" value="Thioredoxin-like"/>
    <property type="match status" value="1"/>
</dbReference>
<keyword id="KW-0963">Cytoplasm</keyword>
<gene>
    <name evidence="1" type="primary">spxH</name>
    <name type="ordered locus">SH1956</name>
</gene>
<organism>
    <name type="scientific">Staphylococcus haemolyticus (strain JCSC1435)</name>
    <dbReference type="NCBI Taxonomy" id="279808"/>
    <lineage>
        <taxon>Bacteria</taxon>
        <taxon>Bacillati</taxon>
        <taxon>Bacillota</taxon>
        <taxon>Bacilli</taxon>
        <taxon>Bacillales</taxon>
        <taxon>Staphylococcaceae</taxon>
        <taxon>Staphylococcus</taxon>
    </lineage>
</organism>
<reference key="1">
    <citation type="journal article" date="2005" name="J. Bacteriol.">
        <title>Whole-genome sequencing of Staphylococcus haemolyticus uncovers the extreme plasticity of its genome and the evolution of human-colonizing staphylococcal species.</title>
        <authorList>
            <person name="Takeuchi F."/>
            <person name="Watanabe S."/>
            <person name="Baba T."/>
            <person name="Yuzawa H."/>
            <person name="Ito T."/>
            <person name="Morimoto Y."/>
            <person name="Kuroda M."/>
            <person name="Cui L."/>
            <person name="Takahashi M."/>
            <person name="Ankai A."/>
            <person name="Baba S."/>
            <person name="Fukui S."/>
            <person name="Lee J.C."/>
            <person name="Hiramatsu K."/>
        </authorList>
    </citation>
    <scope>NUCLEOTIDE SEQUENCE [LARGE SCALE GENOMIC DNA]</scope>
    <source>
        <strain>JCSC1435</strain>
    </source>
</reference>
<name>SPXH_STAHJ</name>
<protein>
    <recommendedName>
        <fullName evidence="1">ClpXP adapter protein SpxH</fullName>
    </recommendedName>
</protein>
<proteinExistence type="inferred from homology"/>
<comment type="function">
    <text evidence="1">Adapter protein required for efficient degradation of Spx by ClpXP under non-stress conditions. Interaction with Spx stabilizes Spx and exposes the C-terminus of Spx for recognition and proteolysis by ClpXP.</text>
</comment>
<comment type="subunit">
    <text evidence="1">Interacts with Spx.</text>
</comment>
<comment type="subcellular location">
    <subcellularLocation>
        <location evidence="1">Cytoplasm</location>
    </subcellularLocation>
</comment>
<comment type="similarity">
    <text evidence="1">Belongs to the SpxH family.</text>
</comment>
<sequence>MAEELKIVDNRSREDANLSPVNKIEIYSFFDPFNTDCFKLSAIISKLRIEYNQYIRIRHILNPSLKVLTKCQAQSTSDFDNIALAYKAAELQGRLRAERFIHLMQNEIIPKKDIITEEMICDCIINAGLDYNEFKEDLQKSKLTESLKIDLHIAREMEIEQAPSLVFFSEDVHEEGLKVEGLYPYHIYTYIINELMGTPIEKNLPPKIEHYIQKKQLVTTEELLTIYEWPEKLMTKELKKLALQQKVEKLQYPEGDFWQSKMPRI</sequence>